<protein>
    <recommendedName>
        <fullName evidence="1">Phosphoenolpyruvate synthase regulatory protein</fullName>
        <shortName evidence="1">PEP synthase regulatory protein</shortName>
        <shortName evidence="1">PSRP</shortName>
        <ecNumber evidence="1">2.7.11.33</ecNumber>
        <ecNumber evidence="1">2.7.4.28</ecNumber>
    </recommendedName>
    <alternativeName>
        <fullName evidence="1">Pyruvate, water dikinase regulatory protein</fullName>
    </alternativeName>
</protein>
<keyword id="KW-0418">Kinase</keyword>
<keyword id="KW-0547">Nucleotide-binding</keyword>
<keyword id="KW-0723">Serine/threonine-protein kinase</keyword>
<keyword id="KW-0808">Transferase</keyword>
<feature type="chain" id="PRO_0000316675" description="Phosphoenolpyruvate synthase regulatory protein">
    <location>
        <begin position="1"/>
        <end position="277"/>
    </location>
</feature>
<feature type="binding site" evidence="1">
    <location>
        <begin position="157"/>
        <end position="164"/>
    </location>
    <ligand>
        <name>ADP</name>
        <dbReference type="ChEBI" id="CHEBI:456216"/>
    </ligand>
</feature>
<sequence>MDNAVDRHVFYISDGTAITAEVLGHAVMSQFPVTISSITLPFVENESRARAVKDQIDAIYHQTGVRPLVFYSIVLPEIRAIILQSEGFCQDIVQALVAPLQQEMKLDPTPIAHRTHGLNPNNLNKYDARIAAIDYTLAHDDGISLRNLDQAQVILLGVSRCGKTPTSLYLAMQFGIRAANYPFIADDMDNLVLPASLKPLQHKLFGLTIDPERLAAIREERRENSRYASLRQCRMEVAEVEALYRKNQIPWINSTNYSVEEIATKILDIMGLSRRMY</sequence>
<reference key="1">
    <citation type="journal article" date="2008" name="J. Bacteriol.">
        <title>The pangenome structure of Escherichia coli: comparative genomic analysis of E. coli commensal and pathogenic isolates.</title>
        <authorList>
            <person name="Rasko D.A."/>
            <person name="Rosovitz M.J."/>
            <person name="Myers G.S.A."/>
            <person name="Mongodin E.F."/>
            <person name="Fricke W.F."/>
            <person name="Gajer P."/>
            <person name="Crabtree J."/>
            <person name="Sebaihia M."/>
            <person name="Thomson N.R."/>
            <person name="Chaudhuri R."/>
            <person name="Henderson I.R."/>
            <person name="Sperandio V."/>
            <person name="Ravel J."/>
        </authorList>
    </citation>
    <scope>NUCLEOTIDE SEQUENCE [LARGE SCALE GENOMIC DNA]</scope>
    <source>
        <strain>HS</strain>
    </source>
</reference>
<gene>
    <name evidence="1" type="primary">ppsR</name>
    <name type="ordered locus">EcHS_A1783</name>
</gene>
<proteinExistence type="inferred from homology"/>
<dbReference type="EC" id="2.7.11.33" evidence="1"/>
<dbReference type="EC" id="2.7.4.28" evidence="1"/>
<dbReference type="EMBL" id="CP000802">
    <property type="protein sequence ID" value="ABV06099.1"/>
    <property type="molecule type" value="Genomic_DNA"/>
</dbReference>
<dbReference type="RefSeq" id="WP_000368046.1">
    <property type="nucleotide sequence ID" value="NC_009800.1"/>
</dbReference>
<dbReference type="SMR" id="A8A0P5"/>
<dbReference type="GeneID" id="93775866"/>
<dbReference type="KEGG" id="ecx:EcHS_A1783"/>
<dbReference type="HOGENOM" id="CLU_046206_1_0_6"/>
<dbReference type="GO" id="GO:0043531">
    <property type="term" value="F:ADP binding"/>
    <property type="evidence" value="ECO:0007669"/>
    <property type="project" value="UniProtKB-UniRule"/>
</dbReference>
<dbReference type="GO" id="GO:0005524">
    <property type="term" value="F:ATP binding"/>
    <property type="evidence" value="ECO:0007669"/>
    <property type="project" value="InterPro"/>
</dbReference>
<dbReference type="GO" id="GO:0016776">
    <property type="term" value="F:phosphotransferase activity, phosphate group as acceptor"/>
    <property type="evidence" value="ECO:0007669"/>
    <property type="project" value="UniProtKB-UniRule"/>
</dbReference>
<dbReference type="GO" id="GO:0004674">
    <property type="term" value="F:protein serine/threonine kinase activity"/>
    <property type="evidence" value="ECO:0007669"/>
    <property type="project" value="UniProtKB-UniRule"/>
</dbReference>
<dbReference type="HAMAP" id="MF_01062">
    <property type="entry name" value="PSRP"/>
    <property type="match status" value="1"/>
</dbReference>
<dbReference type="InterPro" id="IPR005177">
    <property type="entry name" value="Kinase-pyrophosphorylase"/>
</dbReference>
<dbReference type="InterPro" id="IPR026530">
    <property type="entry name" value="PSRP"/>
</dbReference>
<dbReference type="NCBIfam" id="NF003742">
    <property type="entry name" value="PRK05339.1"/>
    <property type="match status" value="1"/>
</dbReference>
<dbReference type="PANTHER" id="PTHR31756">
    <property type="entry name" value="PYRUVATE, PHOSPHATE DIKINASE REGULATORY PROTEIN 1, CHLOROPLASTIC"/>
    <property type="match status" value="1"/>
</dbReference>
<dbReference type="PANTHER" id="PTHR31756:SF3">
    <property type="entry name" value="PYRUVATE, PHOSPHATE DIKINASE REGULATORY PROTEIN 1, CHLOROPLASTIC"/>
    <property type="match status" value="1"/>
</dbReference>
<dbReference type="Pfam" id="PF03618">
    <property type="entry name" value="Kinase-PPPase"/>
    <property type="match status" value="1"/>
</dbReference>
<comment type="function">
    <text evidence="1">Bifunctional serine/threonine kinase and phosphorylase involved in the regulation of the phosphoenolpyruvate synthase (PEPS) by catalyzing its phosphorylation/dephosphorylation.</text>
</comment>
<comment type="catalytic activity">
    <reaction evidence="1">
        <text>[pyruvate, water dikinase] + ADP = [pyruvate, water dikinase]-phosphate + AMP + H(+)</text>
        <dbReference type="Rhea" id="RHEA:46020"/>
        <dbReference type="Rhea" id="RHEA-COMP:11425"/>
        <dbReference type="Rhea" id="RHEA-COMP:11426"/>
        <dbReference type="ChEBI" id="CHEBI:15378"/>
        <dbReference type="ChEBI" id="CHEBI:43176"/>
        <dbReference type="ChEBI" id="CHEBI:68546"/>
        <dbReference type="ChEBI" id="CHEBI:456215"/>
        <dbReference type="ChEBI" id="CHEBI:456216"/>
        <dbReference type="EC" id="2.7.11.33"/>
    </reaction>
</comment>
<comment type="catalytic activity">
    <reaction evidence="1">
        <text>[pyruvate, water dikinase]-phosphate + phosphate + H(+) = [pyruvate, water dikinase] + diphosphate</text>
        <dbReference type="Rhea" id="RHEA:48580"/>
        <dbReference type="Rhea" id="RHEA-COMP:11425"/>
        <dbReference type="Rhea" id="RHEA-COMP:11426"/>
        <dbReference type="ChEBI" id="CHEBI:15378"/>
        <dbReference type="ChEBI" id="CHEBI:33019"/>
        <dbReference type="ChEBI" id="CHEBI:43176"/>
        <dbReference type="ChEBI" id="CHEBI:43474"/>
        <dbReference type="ChEBI" id="CHEBI:68546"/>
        <dbReference type="EC" id="2.7.4.28"/>
    </reaction>
</comment>
<comment type="similarity">
    <text evidence="1">Belongs to the pyruvate, phosphate/water dikinase regulatory protein family. PSRP subfamily.</text>
</comment>
<evidence type="ECO:0000255" key="1">
    <source>
        <dbReference type="HAMAP-Rule" id="MF_01062"/>
    </source>
</evidence>
<accession>A8A0P5</accession>
<name>PSRP_ECOHS</name>
<organism>
    <name type="scientific">Escherichia coli O9:H4 (strain HS)</name>
    <dbReference type="NCBI Taxonomy" id="331112"/>
    <lineage>
        <taxon>Bacteria</taxon>
        <taxon>Pseudomonadati</taxon>
        <taxon>Pseudomonadota</taxon>
        <taxon>Gammaproteobacteria</taxon>
        <taxon>Enterobacterales</taxon>
        <taxon>Enterobacteriaceae</taxon>
        <taxon>Escherichia</taxon>
    </lineage>
</organism>